<evidence type="ECO:0000250" key="1">
    <source>
        <dbReference type="UniProtKB" id="Q2FYQ8"/>
    </source>
</evidence>
<evidence type="ECO:0000255" key="2">
    <source>
        <dbReference type="PROSITE-ProRule" id="PRU00434"/>
    </source>
</evidence>
<evidence type="ECO:0000305" key="3"/>
<sequence length="233" mass="26229">MIELKHVTFGYNKKQMVLQDINITIPDGENVGILGESGCGKSTLASLVLGLFKPAKGEIYLSDNAVLPIFQHPLTSFNPDWTIETSLKEALYYYRGLTDNTAQDQLLLQHLSTFELNAQLLTKLPSEVSGGQLQRFNVMRSLLAQPRVLICDEITSNLDVIAEQNVINILKAQTITNLNHFIVISHDLSVLQRLVNRIIVLKDGMIVDDFAIEELFNVDRHPYTKELVQAFSY</sequence>
<proteinExistence type="inferred from homology"/>
<dbReference type="EC" id="7.2.2.11" evidence="1"/>
<dbReference type="EMBL" id="BA000033">
    <property type="protein sequence ID" value="BAB95132.1"/>
    <property type="molecule type" value="Genomic_DNA"/>
</dbReference>
<dbReference type="RefSeq" id="WP_000571247.1">
    <property type="nucleotide sequence ID" value="NC_003923.1"/>
</dbReference>
<dbReference type="SMR" id="Q8NWT6"/>
<dbReference type="KEGG" id="sam:MW1267"/>
<dbReference type="HOGENOM" id="CLU_000604_1_23_9"/>
<dbReference type="GO" id="GO:0005886">
    <property type="term" value="C:plasma membrane"/>
    <property type="evidence" value="ECO:0007669"/>
    <property type="project" value="UniProtKB-SubCell"/>
</dbReference>
<dbReference type="GO" id="GO:0015413">
    <property type="term" value="F:ABC-type nickel transporter activity"/>
    <property type="evidence" value="ECO:0007669"/>
    <property type="project" value="UniProtKB-EC"/>
</dbReference>
<dbReference type="GO" id="GO:0005524">
    <property type="term" value="F:ATP binding"/>
    <property type="evidence" value="ECO:0007669"/>
    <property type="project" value="UniProtKB-KW"/>
</dbReference>
<dbReference type="GO" id="GO:0016887">
    <property type="term" value="F:ATP hydrolysis activity"/>
    <property type="evidence" value="ECO:0007669"/>
    <property type="project" value="InterPro"/>
</dbReference>
<dbReference type="CDD" id="cd03257">
    <property type="entry name" value="ABC_NikE_OppD_transporters"/>
    <property type="match status" value="1"/>
</dbReference>
<dbReference type="FunFam" id="3.40.50.300:FF:001829">
    <property type="entry name" value="Nickel import system ATP-binding protein NikE"/>
    <property type="match status" value="1"/>
</dbReference>
<dbReference type="Gene3D" id="3.40.50.300">
    <property type="entry name" value="P-loop containing nucleotide triphosphate hydrolases"/>
    <property type="match status" value="1"/>
</dbReference>
<dbReference type="InterPro" id="IPR003593">
    <property type="entry name" value="AAA+_ATPase"/>
</dbReference>
<dbReference type="InterPro" id="IPR050319">
    <property type="entry name" value="ABC_transp_ATP-bind"/>
</dbReference>
<dbReference type="InterPro" id="IPR003439">
    <property type="entry name" value="ABC_transporter-like_ATP-bd"/>
</dbReference>
<dbReference type="InterPro" id="IPR027417">
    <property type="entry name" value="P-loop_NTPase"/>
</dbReference>
<dbReference type="PANTHER" id="PTHR43776">
    <property type="entry name" value="TRANSPORT ATP-BINDING PROTEIN"/>
    <property type="match status" value="1"/>
</dbReference>
<dbReference type="Pfam" id="PF00005">
    <property type="entry name" value="ABC_tran"/>
    <property type="match status" value="1"/>
</dbReference>
<dbReference type="SMART" id="SM00382">
    <property type="entry name" value="AAA"/>
    <property type="match status" value="1"/>
</dbReference>
<dbReference type="SUPFAM" id="SSF52540">
    <property type="entry name" value="P-loop containing nucleoside triphosphate hydrolases"/>
    <property type="match status" value="1"/>
</dbReference>
<dbReference type="PROSITE" id="PS50893">
    <property type="entry name" value="ABC_TRANSPORTER_2"/>
    <property type="match status" value="1"/>
</dbReference>
<organism>
    <name type="scientific">Staphylococcus aureus (strain MW2)</name>
    <dbReference type="NCBI Taxonomy" id="196620"/>
    <lineage>
        <taxon>Bacteria</taxon>
        <taxon>Bacillati</taxon>
        <taxon>Bacillota</taxon>
        <taxon>Bacilli</taxon>
        <taxon>Bacillales</taxon>
        <taxon>Staphylococcaceae</taxon>
        <taxon>Staphylococcus</taxon>
    </lineage>
</organism>
<gene>
    <name evidence="1" type="primary">nikE</name>
    <name type="synonym">oppF2</name>
    <name type="ordered locus">MW1267</name>
</gene>
<reference key="1">
    <citation type="journal article" date="2002" name="Lancet">
        <title>Genome and virulence determinants of high virulence community-acquired MRSA.</title>
        <authorList>
            <person name="Baba T."/>
            <person name="Takeuchi F."/>
            <person name="Kuroda M."/>
            <person name="Yuzawa H."/>
            <person name="Aoki K."/>
            <person name="Oguchi A."/>
            <person name="Nagai Y."/>
            <person name="Iwama N."/>
            <person name="Asano K."/>
            <person name="Naimi T."/>
            <person name="Kuroda H."/>
            <person name="Cui L."/>
            <person name="Yamamoto K."/>
            <person name="Hiramatsu K."/>
        </authorList>
    </citation>
    <scope>NUCLEOTIDE SEQUENCE [LARGE SCALE GENOMIC DNA]</scope>
    <source>
        <strain>MW2</strain>
    </source>
</reference>
<accession>Q8NWT6</accession>
<comment type="function">
    <text evidence="1">Part of the ABC transporter complex NikABCDE (Opp2) involved in nickel import. Probably responsible for energy coupling to the transport system.</text>
</comment>
<comment type="catalytic activity">
    <reaction evidence="1">
        <text>Ni(2+)(out) + ATP + H2O = Ni(2+)(in) + ADP + phosphate + H(+)</text>
        <dbReference type="Rhea" id="RHEA:15557"/>
        <dbReference type="ChEBI" id="CHEBI:15377"/>
        <dbReference type="ChEBI" id="CHEBI:15378"/>
        <dbReference type="ChEBI" id="CHEBI:30616"/>
        <dbReference type="ChEBI" id="CHEBI:43474"/>
        <dbReference type="ChEBI" id="CHEBI:49786"/>
        <dbReference type="ChEBI" id="CHEBI:456216"/>
        <dbReference type="EC" id="7.2.2.11"/>
    </reaction>
    <physiologicalReaction direction="left-to-right" evidence="1">
        <dbReference type="Rhea" id="RHEA:15558"/>
    </physiologicalReaction>
</comment>
<comment type="subunit">
    <text evidence="1">The complex is composed of two ATP-binding proteins (NikD and NikE), two transmembrane proteins (NikB and NikC) and a solute-binding protein (NikA).</text>
</comment>
<comment type="subcellular location">
    <subcellularLocation>
        <location evidence="3">Cell membrane</location>
        <topology evidence="3">Peripheral membrane protein</topology>
    </subcellularLocation>
</comment>
<comment type="similarity">
    <text evidence="3">Belongs to the ABC transporter superfamily.</text>
</comment>
<name>NIKE_STAAW</name>
<feature type="chain" id="PRO_0000276806" description="Nickel import system ATP-binding protein NikE">
    <location>
        <begin position="1"/>
        <end position="233"/>
    </location>
</feature>
<feature type="domain" description="ABC transporter" evidence="2">
    <location>
        <begin position="2"/>
        <end position="228"/>
    </location>
</feature>
<feature type="binding site" evidence="2">
    <location>
        <begin position="35"/>
        <end position="42"/>
    </location>
    <ligand>
        <name>ATP</name>
        <dbReference type="ChEBI" id="CHEBI:30616"/>
    </ligand>
</feature>
<keyword id="KW-0067">ATP-binding</keyword>
<keyword id="KW-1003">Cell membrane</keyword>
<keyword id="KW-0406">Ion transport</keyword>
<keyword id="KW-0472">Membrane</keyword>
<keyword id="KW-0533">Nickel</keyword>
<keyword id="KW-0921">Nickel transport</keyword>
<keyword id="KW-0547">Nucleotide-binding</keyword>
<keyword id="KW-1278">Translocase</keyword>
<keyword id="KW-0813">Transport</keyword>
<protein>
    <recommendedName>
        <fullName evidence="1">Nickel import system ATP-binding protein NikE</fullName>
        <ecNumber evidence="1">7.2.2.11</ecNumber>
    </recommendedName>
</protein>